<sequence length="127" mass="14216">MRGAGAILRPAARGARDLNPRRDISSWLAQWFPRTPARSVVALKTPIKVELVAGKTYRWCVCGRSKKQPFCDGSHFFQRTGLSPLKFKAQETRMVALCTCKATQRPPYCDGTHRSERVQKAEVGSPL</sequence>
<keyword id="KW-0001">2Fe-2S</keyword>
<keyword id="KW-0002">3D-structure</keyword>
<keyword id="KW-0007">Acetylation</keyword>
<keyword id="KW-0408">Iron</keyword>
<keyword id="KW-0411">Iron-sulfur</keyword>
<keyword id="KW-0479">Metal-binding</keyword>
<keyword id="KW-0496">Mitochondrion</keyword>
<keyword id="KW-1267">Proteomics identification</keyword>
<keyword id="KW-1185">Reference proteome</keyword>
<keyword id="KW-0809">Transit peptide</keyword>
<dbReference type="EMBL" id="AC006449">
    <property type="status" value="NOT_ANNOTATED_CDS"/>
    <property type="molecule type" value="Genomic_DNA"/>
</dbReference>
<dbReference type="EMBL" id="BM546511">
    <property type="status" value="NOT_ANNOTATED_CDS"/>
    <property type="molecule type" value="mRNA"/>
</dbReference>
<dbReference type="CCDS" id="CCDS45662.1"/>
<dbReference type="RefSeq" id="NP_001129970.1">
    <property type="nucleotide sequence ID" value="NM_001136498.2"/>
</dbReference>
<dbReference type="PDB" id="6AVJ">
    <property type="method" value="X-ray"/>
    <property type="resolution" value="1.90 A"/>
    <property type="chains" value="A/B/C=36-127"/>
</dbReference>
<dbReference type="PDBsum" id="6AVJ"/>
<dbReference type="SMR" id="P0C7P0"/>
<dbReference type="BioGRID" id="129759">
    <property type="interactions" value="90"/>
</dbReference>
<dbReference type="FunCoup" id="P0C7P0">
    <property type="interactions" value="445"/>
</dbReference>
<dbReference type="IntAct" id="P0C7P0">
    <property type="interactions" value="95"/>
</dbReference>
<dbReference type="STRING" id="9606.ENSP00000483781"/>
<dbReference type="iPTMnet" id="P0C7P0"/>
<dbReference type="PhosphoSitePlus" id="P0C7P0"/>
<dbReference type="BioMuta" id="CISD3"/>
<dbReference type="DMDM" id="190358744"/>
<dbReference type="jPOST" id="P0C7P0"/>
<dbReference type="MassIVE" id="P0C7P0"/>
<dbReference type="PaxDb" id="9606-ENSP00000483781"/>
<dbReference type="PeptideAtlas" id="P0C7P0"/>
<dbReference type="ProteomicsDB" id="52352"/>
<dbReference type="Pumba" id="P0C7P0"/>
<dbReference type="Antibodypedia" id="75426">
    <property type="antibodies" value="8 antibodies from 4 providers"/>
</dbReference>
<dbReference type="DNASU" id="284106"/>
<dbReference type="Ensembl" id="ENST00000613478.2">
    <property type="protein sequence ID" value="ENSP00000483781.1"/>
    <property type="gene ID" value="ENSG00000277972.2"/>
</dbReference>
<dbReference type="Ensembl" id="ENST00000620783.2">
    <property type="protein sequence ID" value="ENSP00000484950.1"/>
    <property type="gene ID" value="ENSG00000274768.2"/>
</dbReference>
<dbReference type="GeneID" id="284106"/>
<dbReference type="KEGG" id="hsa:284106"/>
<dbReference type="MANE-Select" id="ENST00000613478.2">
    <property type="protein sequence ID" value="ENSP00000483781.1"/>
    <property type="RefSeq nucleotide sequence ID" value="NM_001136498.2"/>
    <property type="RefSeq protein sequence ID" value="NP_001129970.1"/>
</dbReference>
<dbReference type="UCSC" id="uc010wds.2">
    <property type="organism name" value="human"/>
</dbReference>
<dbReference type="AGR" id="HGNC:27578"/>
<dbReference type="CTD" id="284106"/>
<dbReference type="DisGeNET" id="284106"/>
<dbReference type="GeneCards" id="CISD3"/>
<dbReference type="HGNC" id="HGNC:27578">
    <property type="gene designation" value="CISD3"/>
</dbReference>
<dbReference type="HPA" id="ENSG00000277972">
    <property type="expression patterns" value="Low tissue specificity"/>
</dbReference>
<dbReference type="MIM" id="611933">
    <property type="type" value="gene"/>
</dbReference>
<dbReference type="neXtProt" id="NX_P0C7P0"/>
<dbReference type="OpenTargets" id="ENSG00000277972"/>
<dbReference type="PharmGKB" id="PA162382311"/>
<dbReference type="VEuPathDB" id="HostDB:ENSG00000277972"/>
<dbReference type="eggNOG" id="KOG4605">
    <property type="taxonomic scope" value="Eukaryota"/>
</dbReference>
<dbReference type="GeneTree" id="ENSGT00390000004574"/>
<dbReference type="HOGENOM" id="CLU_145019_1_0_1"/>
<dbReference type="InParanoid" id="P0C7P0"/>
<dbReference type="OMA" id="CRLFFSQ"/>
<dbReference type="OrthoDB" id="15717at2759"/>
<dbReference type="PAN-GO" id="P0C7P0">
    <property type="GO annotations" value="3 GO annotations based on evolutionary models"/>
</dbReference>
<dbReference type="PhylomeDB" id="P0C7P0"/>
<dbReference type="TreeFam" id="TF313111"/>
<dbReference type="PathwayCommons" id="P0C7P0"/>
<dbReference type="SignaLink" id="P0C7P0"/>
<dbReference type="BioGRID-ORCS" id="284106">
    <property type="hits" value="19 hits in 1154 CRISPR screens"/>
</dbReference>
<dbReference type="ChiTaRS" id="CISD3">
    <property type="organism name" value="human"/>
</dbReference>
<dbReference type="GenomeRNAi" id="284106"/>
<dbReference type="Pharos" id="P0C7P0">
    <property type="development level" value="Tbio"/>
</dbReference>
<dbReference type="PRO" id="PR:P0C7P0"/>
<dbReference type="Proteomes" id="UP000005640">
    <property type="component" value="Chromosome 17"/>
</dbReference>
<dbReference type="RNAct" id="P0C7P0">
    <property type="molecule type" value="protein"/>
</dbReference>
<dbReference type="Bgee" id="ENSG00000277972">
    <property type="expression patterns" value="Expressed in mucosa of transverse colon and 97 other cell types or tissues"/>
</dbReference>
<dbReference type="GO" id="GO:0005739">
    <property type="term" value="C:mitochondrion"/>
    <property type="evidence" value="ECO:0000314"/>
    <property type="project" value="UniProtKB"/>
</dbReference>
<dbReference type="GO" id="GO:0051537">
    <property type="term" value="F:2 iron, 2 sulfur cluster binding"/>
    <property type="evidence" value="ECO:0000314"/>
    <property type="project" value="UniProtKB"/>
</dbReference>
<dbReference type="GO" id="GO:0046872">
    <property type="term" value="F:metal ion binding"/>
    <property type="evidence" value="ECO:0000314"/>
    <property type="project" value="UniProtKB"/>
</dbReference>
<dbReference type="GO" id="GO:0051604">
    <property type="term" value="P:protein maturation"/>
    <property type="evidence" value="ECO:0000314"/>
    <property type="project" value="UniProtKB"/>
</dbReference>
<dbReference type="FunFam" id="3.40.5.90:FF:000003">
    <property type="entry name" value="CDGSH iron sulfur domain 3"/>
    <property type="match status" value="1"/>
</dbReference>
<dbReference type="FunFam" id="3.40.5.90:FF:000002">
    <property type="entry name" value="CDGSH iron-sulfur domain-containing protein 3, mitochondrial"/>
    <property type="match status" value="1"/>
</dbReference>
<dbReference type="Gene3D" id="3.40.5.90">
    <property type="entry name" value="CDGSH iron-sulfur domain, mitoNEET-type"/>
    <property type="match status" value="2"/>
</dbReference>
<dbReference type="InterPro" id="IPR052950">
    <property type="entry name" value="CISD"/>
</dbReference>
<dbReference type="InterPro" id="IPR018967">
    <property type="entry name" value="FeS-contain_CDGSH-typ"/>
</dbReference>
<dbReference type="InterPro" id="IPR042216">
    <property type="entry name" value="MitoNEET_CISD"/>
</dbReference>
<dbReference type="PANTHER" id="PTHR46491">
    <property type="entry name" value="CDGSH IRON SULFUR DOMAIN PROTEIN HOMOLOG"/>
    <property type="match status" value="1"/>
</dbReference>
<dbReference type="PANTHER" id="PTHR46491:SF3">
    <property type="entry name" value="CDGSH IRON-SULFUR DOMAIN-CONTAINING PROTEIN 3, MITOCHONDRIAL"/>
    <property type="match status" value="1"/>
</dbReference>
<dbReference type="Pfam" id="PF09360">
    <property type="entry name" value="zf-CDGSH"/>
    <property type="match status" value="2"/>
</dbReference>
<dbReference type="SMART" id="SM00704">
    <property type="entry name" value="ZnF_CDGSH"/>
    <property type="match status" value="2"/>
</dbReference>
<protein>
    <recommendedName>
        <fullName>CDGSH iron-sulfur domain-containing protein 3, mitochondrial</fullName>
    </recommendedName>
    <alternativeName>
        <fullName>MitoNEET-related protein 2</fullName>
        <shortName>Miner2</shortName>
    </alternativeName>
    <alternativeName>
        <fullName evidence="5">Mitochondrial inner NEET protein</fullName>
        <shortName evidence="5">MiNT</shortName>
    </alternativeName>
</protein>
<accession>P0C7P0</accession>
<feature type="transit peptide" description="Mitochondrion" evidence="2">
    <location>
        <begin position="1"/>
        <end position="14"/>
    </location>
</feature>
<feature type="chain" id="PRO_0000341405" description="CDGSH iron-sulfur domain-containing protein 3, mitochondrial">
    <location>
        <begin position="15"/>
        <end position="127"/>
    </location>
</feature>
<feature type="binding site" evidence="4 9">
    <location>
        <position position="60"/>
    </location>
    <ligand>
        <name>[2Fe-2S] cluster</name>
        <dbReference type="ChEBI" id="CHEBI:190135"/>
        <label>1</label>
    </ligand>
</feature>
<feature type="binding site" evidence="4 9">
    <location>
        <position position="62"/>
    </location>
    <ligand>
        <name>[2Fe-2S] cluster</name>
        <dbReference type="ChEBI" id="CHEBI:190135"/>
        <label>1</label>
    </ligand>
</feature>
<feature type="binding site" evidence="4 9">
    <location>
        <position position="71"/>
    </location>
    <ligand>
        <name>[2Fe-2S] cluster</name>
        <dbReference type="ChEBI" id="CHEBI:190135"/>
        <label>1</label>
    </ligand>
</feature>
<feature type="binding site" evidence="8 9">
    <location>
        <position position="75"/>
    </location>
    <ligand>
        <name>[2Fe-2S] cluster</name>
        <dbReference type="ChEBI" id="CHEBI:190135"/>
        <label>1</label>
    </ligand>
</feature>
<feature type="binding site" evidence="4 9">
    <location>
        <position position="98"/>
    </location>
    <ligand>
        <name>[2Fe-2S] cluster</name>
        <dbReference type="ChEBI" id="CHEBI:190135"/>
        <label>2</label>
    </ligand>
</feature>
<feature type="binding site" evidence="4 9">
    <location>
        <position position="100"/>
    </location>
    <ligand>
        <name>[2Fe-2S] cluster</name>
        <dbReference type="ChEBI" id="CHEBI:190135"/>
        <label>2</label>
    </ligand>
</feature>
<feature type="binding site" evidence="4 9">
    <location>
        <position position="109"/>
    </location>
    <ligand>
        <name>[2Fe-2S] cluster</name>
        <dbReference type="ChEBI" id="CHEBI:190135"/>
        <label>2</label>
    </ligand>
</feature>
<feature type="binding site" evidence="8 9">
    <location>
        <position position="113"/>
    </location>
    <ligand>
        <name>[2Fe-2S] cluster</name>
        <dbReference type="ChEBI" id="CHEBI:190135"/>
        <label>2</label>
    </ligand>
</feature>
<feature type="modified residue" description="N6-acetyllysine; alternate" evidence="10">
    <location>
        <position position="55"/>
    </location>
</feature>
<feature type="modified residue" description="N6-succinyllysine; alternate" evidence="1">
    <location>
        <position position="55"/>
    </location>
</feature>
<feature type="modified residue" description="N6-acetyllysine" evidence="1">
    <location>
        <position position="86"/>
    </location>
</feature>
<feature type="mutagenesis site" description="Increases iron-sulfur cluster stability; when associated with C-113." evidence="4">
    <original>H</original>
    <variation>C</variation>
    <location>
        <position position="75"/>
    </location>
</feature>
<feature type="mutagenesis site" description="Increases iron-sulfur cluster stability; when associated with C-75." evidence="4">
    <original>H</original>
    <variation>C</variation>
    <location>
        <position position="113"/>
    </location>
</feature>
<feature type="strand" evidence="11">
    <location>
        <begin position="47"/>
        <end position="51"/>
    </location>
</feature>
<feature type="strand" evidence="11">
    <location>
        <begin position="56"/>
        <end position="59"/>
    </location>
</feature>
<feature type="strand" evidence="11">
    <location>
        <begin position="61"/>
        <end position="63"/>
    </location>
</feature>
<feature type="helix" evidence="11">
    <location>
        <begin position="74"/>
        <end position="77"/>
    </location>
</feature>
<feature type="strand" evidence="11">
    <location>
        <begin position="85"/>
        <end position="88"/>
    </location>
</feature>
<feature type="strand" evidence="11">
    <location>
        <begin position="93"/>
        <end position="97"/>
    </location>
</feature>
<feature type="strand" evidence="11">
    <location>
        <begin position="99"/>
        <end position="101"/>
    </location>
</feature>
<feature type="helix" evidence="11">
    <location>
        <begin position="112"/>
        <end position="114"/>
    </location>
</feature>
<feature type="helix" evidence="11">
    <location>
        <begin position="116"/>
        <end position="119"/>
    </location>
</feature>
<evidence type="ECO:0000250" key="1">
    <source>
        <dbReference type="UniProtKB" id="B1AR13"/>
    </source>
</evidence>
<evidence type="ECO:0000255" key="2"/>
<evidence type="ECO:0000269" key="3">
    <source>
    </source>
</evidence>
<evidence type="ECO:0000269" key="4">
    <source>
    </source>
</evidence>
<evidence type="ECO:0000303" key="5">
    <source>
    </source>
</evidence>
<evidence type="ECO:0000305" key="6"/>
<evidence type="ECO:0000305" key="7">
    <source>
    </source>
</evidence>
<evidence type="ECO:0000305" key="8">
    <source>
    </source>
</evidence>
<evidence type="ECO:0007744" key="9">
    <source>
        <dbReference type="PDB" id="6AVJ"/>
    </source>
</evidence>
<evidence type="ECO:0007744" key="10">
    <source>
    </source>
</evidence>
<evidence type="ECO:0007829" key="11">
    <source>
        <dbReference type="PDB" id="6AVJ"/>
    </source>
</evidence>
<proteinExistence type="evidence at protein level"/>
<gene>
    <name type="primary">CISD3</name>
</gene>
<name>CISD3_HUMAN</name>
<organism>
    <name type="scientific">Homo sapiens</name>
    <name type="common">Human</name>
    <dbReference type="NCBI Taxonomy" id="9606"/>
    <lineage>
        <taxon>Eukaryota</taxon>
        <taxon>Metazoa</taxon>
        <taxon>Chordata</taxon>
        <taxon>Craniata</taxon>
        <taxon>Vertebrata</taxon>
        <taxon>Euteleostomi</taxon>
        <taxon>Mammalia</taxon>
        <taxon>Eutheria</taxon>
        <taxon>Euarchontoglires</taxon>
        <taxon>Primates</taxon>
        <taxon>Haplorrhini</taxon>
        <taxon>Catarrhini</taxon>
        <taxon>Hominidae</taxon>
        <taxon>Homo</taxon>
    </lineage>
</organism>
<reference key="1">
    <citation type="journal article" date="2006" name="Nature">
        <title>DNA sequence of human chromosome 17 and analysis of rearrangement in the human lineage.</title>
        <authorList>
            <person name="Zody M.C."/>
            <person name="Garber M."/>
            <person name="Adams D.J."/>
            <person name="Sharpe T."/>
            <person name="Harrow J."/>
            <person name="Lupski J.R."/>
            <person name="Nicholson C."/>
            <person name="Searle S.M."/>
            <person name="Wilming L."/>
            <person name="Young S.K."/>
            <person name="Abouelleil A."/>
            <person name="Allen N.R."/>
            <person name="Bi W."/>
            <person name="Bloom T."/>
            <person name="Borowsky M.L."/>
            <person name="Bugalter B.E."/>
            <person name="Butler J."/>
            <person name="Chang J.L."/>
            <person name="Chen C.-K."/>
            <person name="Cook A."/>
            <person name="Corum B."/>
            <person name="Cuomo C.A."/>
            <person name="de Jong P.J."/>
            <person name="DeCaprio D."/>
            <person name="Dewar K."/>
            <person name="FitzGerald M."/>
            <person name="Gilbert J."/>
            <person name="Gibson R."/>
            <person name="Gnerre S."/>
            <person name="Goldstein S."/>
            <person name="Grafham D.V."/>
            <person name="Grocock R."/>
            <person name="Hafez N."/>
            <person name="Hagopian D.S."/>
            <person name="Hart E."/>
            <person name="Norman C.H."/>
            <person name="Humphray S."/>
            <person name="Jaffe D.B."/>
            <person name="Jones M."/>
            <person name="Kamal M."/>
            <person name="Khodiyar V.K."/>
            <person name="LaButti K."/>
            <person name="Laird G."/>
            <person name="Lehoczky J."/>
            <person name="Liu X."/>
            <person name="Lokyitsang T."/>
            <person name="Loveland J."/>
            <person name="Lui A."/>
            <person name="Macdonald P."/>
            <person name="Major J.E."/>
            <person name="Matthews L."/>
            <person name="Mauceli E."/>
            <person name="McCarroll S.A."/>
            <person name="Mihalev A.H."/>
            <person name="Mudge J."/>
            <person name="Nguyen C."/>
            <person name="Nicol R."/>
            <person name="O'Leary S.B."/>
            <person name="Osoegawa K."/>
            <person name="Schwartz D.C."/>
            <person name="Shaw-Smith C."/>
            <person name="Stankiewicz P."/>
            <person name="Steward C."/>
            <person name="Swarbreck D."/>
            <person name="Venkataraman V."/>
            <person name="Whittaker C.A."/>
            <person name="Yang X."/>
            <person name="Zimmer A.R."/>
            <person name="Bradley A."/>
            <person name="Hubbard T."/>
            <person name="Birren B.W."/>
            <person name="Rogers J."/>
            <person name="Lander E.S."/>
            <person name="Nusbaum C."/>
        </authorList>
    </citation>
    <scope>NUCLEOTIDE SEQUENCE [LARGE SCALE GENOMIC DNA]</scope>
</reference>
<reference key="2">
    <citation type="journal article" date="2004" name="Genome Res.">
        <title>The status, quality, and expansion of the NIH full-length cDNA project: the Mammalian Gene Collection (MGC).</title>
        <authorList>
            <consortium name="The MGC Project Team"/>
        </authorList>
    </citation>
    <scope>NUCLEOTIDE SEQUENCE [LARGE SCALE MRNA]</scope>
    <source>
        <tissue>Hippocampus</tissue>
    </source>
</reference>
<reference key="3">
    <citation type="journal article" date="2007" name="Proc. Natl. Acad. Sci. U.S.A.">
        <title>MitoNEET is an iron-containing outer mitochondrial membrane protein that regulates oxidative capacity.</title>
        <authorList>
            <person name="Wiley S.E."/>
            <person name="Murphy A.N."/>
            <person name="Ross S.A."/>
            <person name="van der Geer P."/>
            <person name="Dixon J.E."/>
        </authorList>
    </citation>
    <scope>COFACTOR</scope>
    <scope>SUBCELLULAR LOCATION</scope>
</reference>
<reference key="4">
    <citation type="journal article" date="2009" name="Science">
        <title>Lysine acetylation targets protein complexes and co-regulates major cellular functions.</title>
        <authorList>
            <person name="Choudhary C."/>
            <person name="Kumar C."/>
            <person name="Gnad F."/>
            <person name="Nielsen M.L."/>
            <person name="Rehman M."/>
            <person name="Walther T.C."/>
            <person name="Olsen J.V."/>
            <person name="Mann M."/>
        </authorList>
    </citation>
    <scope>ACETYLATION [LARGE SCALE ANALYSIS] AT LYS-55</scope>
    <scope>IDENTIFICATION BY MASS SPECTROMETRY [LARGE SCALE ANALYSIS]</scope>
</reference>
<reference evidence="9" key="5">
    <citation type="journal article" date="2018" name="Proc. Natl. Acad. Sci. U.S.A.">
        <title>Structure of the human monomeric NEET protein MiNT and its role in regulating iron and reactive oxygen species in cancer cells.</title>
        <authorList>
            <person name="Lipper C.H."/>
            <person name="Karmi O."/>
            <person name="Sohn Y.S."/>
            <person name="Darash-Yahana M."/>
            <person name="Lammert H."/>
            <person name="Song L."/>
            <person name="Liu A."/>
            <person name="Mittler R."/>
            <person name="Nechushtai R."/>
            <person name="Onuchic J.N."/>
            <person name="Jennings P.A."/>
        </authorList>
    </citation>
    <scope>X-RAY CRYSTALLOGRAPHY (1.90 ANGSTROMS) OF 36-127</scope>
    <scope>FUNCTION</scope>
    <scope>COFACTOR</scope>
    <scope>SUBUNIT</scope>
    <scope>MUTAGENESIS OF HIS-75 AND HIS-113</scope>
</reference>
<comment type="function">
    <text evidence="4">Can transfer its iron-sulfur clusters to the apoferrodoxins FDX1 and FDX2. Contributes to mitochondrial iron homeostasis and in maintaining normal levels of free iron and reactive oxygen species, and thereby contributes to normal mitochondrial function.</text>
</comment>
<comment type="cofactor">
    <cofactor evidence="4 7">
        <name>[2Fe-2S] cluster</name>
        <dbReference type="ChEBI" id="CHEBI:190135"/>
    </cofactor>
    <text evidence="4 7">Binds 2 [2Fe-2S] clusters per subunit.</text>
</comment>
<comment type="subunit">
    <text evidence="4">Monomer.</text>
</comment>
<comment type="subcellular location">
    <subcellularLocation>
        <location evidence="3">Mitochondrion</location>
    </subcellularLocation>
</comment>
<comment type="similarity">
    <text evidence="6">Belongs to the CISD protein family.</text>
</comment>